<keyword id="KW-0002">3D-structure</keyword>
<keyword id="KW-0326">Glycosidase</keyword>
<keyword id="KW-0378">Hydrolase</keyword>
<keyword id="KW-1185">Reference proteome</keyword>
<keyword id="KW-0346">Stress response</keyword>
<accession>K5BDL0</accession>
<name>GGH_MYCHD</name>
<proteinExistence type="evidence at protein level"/>
<organism>
    <name type="scientific">Mycolicibacterium hassiacum (strain DSM 44199 / CIP 105218 / JCM 12690 / 3849)</name>
    <name type="common">Mycobacterium hassiacum</name>
    <dbReference type="NCBI Taxonomy" id="1122247"/>
    <lineage>
        <taxon>Bacteria</taxon>
        <taxon>Bacillati</taxon>
        <taxon>Actinomycetota</taxon>
        <taxon>Actinomycetes</taxon>
        <taxon>Mycobacteriales</taxon>
        <taxon>Mycobacteriaceae</taxon>
        <taxon>Mycolicibacterium</taxon>
    </lineage>
</organism>
<sequence>MPHDPSFTPTQLAARAAYLLRGNDLGTMTTAAPLLYPHMWSWDAAFVAIGLAPLSVERAVVELDTLLSAQWRNGMIPHIVFANGVDGYFPGPARWATATLADNAPRNRLTSGITQPPVHAIAVQRILEHARTRGRSTRAVAEAFLDRRWGDLMRWHRWLAECRDRNERGRITLYHGWESGMDNSPRWDSAYANVVPGKLPEYQRADNVIITDPSQRPSDGEYDRYLWLLEEMKAVRYDDERLPSVMSFQVEDVFFSAIFSVACQVLAEIGEDYKRPHADVKDLYLWAERFRAGVVETTDQRTGAARDFDVLAEKWLVTETAAQFAPLLCGGLPHDRERALLKLLEGPRFCGHPDLKYGLIPSTSPVSRDFRPREYWRGPVWPVLTWLFSWCFARRGWAERARLLRQEGLRQASDGSFAEYYEPFTGEPLGSMQQSWTAAAVLDWLG</sequence>
<reference key="1">
    <citation type="journal article" date="2012" name="J. Bacteriol.">
        <title>Genome sequence of Mycobacterium hassiacum DSM 44199, a rare source of heat-stable mycobacterial proteins.</title>
        <authorList>
            <person name="Tiago I."/>
            <person name="Maranha A."/>
            <person name="Mendes V."/>
            <person name="Alarico S."/>
            <person name="Moynihan P.J."/>
            <person name="Clarke A.J."/>
            <person name="Macedo-Ribeiro S."/>
            <person name="Pereira P.J."/>
            <person name="Empadinhas N."/>
        </authorList>
    </citation>
    <scope>NUCLEOTIDE SEQUENCE [LARGE SCALE GENOMIC DNA]</scope>
    <source>
        <strain>DSM 44199 / CIP 105218 / JCM 12690 / 3849</strain>
    </source>
</reference>
<reference key="2">
    <citation type="journal article" date="2014" name="Sci. Rep.">
        <title>Mycobacterium hassiacum recovers from nitrogen starvation with up-regulation of a novel glucosylglycerate hydrolase and depletion of the accumulated glucosylglycerate.</title>
        <authorList>
            <person name="Alarico S."/>
            <person name="Costa M."/>
            <person name="Sousa M.S."/>
            <person name="Maranha A."/>
            <person name="Lourenco E.C."/>
            <person name="Faria T.Q."/>
            <person name="Ventura M.R."/>
            <person name="Empadinhas N."/>
        </authorList>
    </citation>
    <scope>FUNCTION</scope>
    <scope>CATALYTIC ACTIVITY</scope>
    <scope>ACTIVITY REGULATION</scope>
    <scope>BIOPHYSICOCHEMICAL PROPERTIES</scope>
    <scope>INDUCTION</scope>
    <source>
        <strain>DSM 44199 / CIP 105218 / JCM 12690 / 3849</strain>
    </source>
</reference>
<reference key="3">
    <citation type="journal article" date="2017" name="Acta Crystallogr. F Struct. Biol. Commun.">
        <title>Production, crystallization and structure determination of a mycobacterial glucosylglycerate hydrolase.</title>
        <authorList>
            <person name="Cereija T.B."/>
            <person name="Alarico S."/>
            <person name="Empadinhas N."/>
            <person name="Pereira P.J.B."/>
        </authorList>
    </citation>
    <scope>SUBUNIT</scope>
    <scope>CRYSTALLIZATION</scope>
    <source>
        <strain>DSM 44199 / CIP 105218 / JCM 12690 / 3849</strain>
    </source>
</reference>
<reference evidence="19" key="4">
    <citation type="submission" date="2018-03" db="PDB data bank">
        <title>Structural characterization of mycobacterial hydrolase.</title>
        <authorList>
            <person name="Cereija T.B."/>
            <person name="Alarico S."/>
            <person name="Lourenco E.C."/>
            <person name="Ventura R."/>
            <person name="Empadinhas N."/>
            <person name="Macedo-Ribeiro S."/>
            <person name="Pereira P.J.B."/>
        </authorList>
    </citation>
    <scope>X-RAY CRYSTALLOGRAPHY (2.32 ANGSTROMS)</scope>
</reference>
<reference evidence="8 9 10 11 12 13 14 15 16 17 18" key="5">
    <citation type="journal article" date="2019" name="IUCrJ">
        <title>The structural characterization of a glucosylglycerate hydrolase provides insights into the molecular mechanism of mycobacterial recovery from nitrogen starvation.</title>
        <authorList>
            <person name="Cereija T.B."/>
            <person name="Alarico S."/>
            <person name="Lourenco E.C."/>
            <person name="Manso J.A."/>
            <person name="Ventura R."/>
            <person name="Empadinhas N."/>
            <person name="Macedo-Ribeiro S."/>
            <person name="Pereira P.J.B."/>
        </authorList>
    </citation>
    <scope>X-RAY CRYSTALLOGRAPHY (1.68 ANGSTROMS) OF WILD-TYPE AND MUTANTS ALA-43; ALA-182 AND ALA-419 IN COMPLEXES WITH SERINE; GLUCOSYLGLYCERATE AND MANNOSYLGLYCERATE</scope>
    <scope>FUNCTION</scope>
    <scope>CATALYTIC ACTIVITY</scope>
    <scope>REACTION MECHANISM</scope>
    <scope>BIOPHYSICOCHEMICAL PROPERTIES</scope>
    <scope>SUBUNIT</scope>
    <scope>MUTAGENESIS OF ASP-43; ASP-182 AND GLU-419</scope>
    <scope>ACTIVE SITE</scope>
</reference>
<feature type="chain" id="PRO_0000449938" description="Glucosylglycerate hydrolase">
    <location>
        <begin position="1"/>
        <end position="446"/>
    </location>
</feature>
<feature type="active site" description="Proton donor" evidence="6">
    <location>
        <position position="182"/>
    </location>
</feature>
<feature type="active site" description="Proton acceptor" evidence="6">
    <location>
        <position position="419"/>
    </location>
</feature>
<feature type="binding site" evidence="3">
    <location>
        <position position="36"/>
    </location>
    <ligand>
        <name>substrate</name>
    </ligand>
</feature>
<feature type="binding site" evidence="3">
    <location>
        <begin position="40"/>
        <end position="43"/>
    </location>
    <ligand>
        <name>substrate</name>
    </ligand>
</feature>
<feature type="binding site" evidence="3">
    <location>
        <position position="88"/>
    </location>
    <ligand>
        <name>substrate</name>
    </ligand>
</feature>
<feature type="binding site" evidence="3">
    <location>
        <position position="115"/>
    </location>
    <ligand>
        <name>substrate</name>
    </ligand>
</feature>
<feature type="binding site" evidence="3">
    <location>
        <position position="180"/>
    </location>
    <ligand>
        <name>substrate</name>
    </ligand>
</feature>
<feature type="binding site" evidence="3">
    <location>
        <position position="216"/>
    </location>
    <ligand>
        <name>substrate</name>
    </ligand>
</feature>
<feature type="binding site" evidence="3">
    <location>
        <begin position="375"/>
        <end position="376"/>
    </location>
    <ligand>
        <name>substrate</name>
    </ligand>
</feature>
<feature type="binding site" evidence="3">
    <location>
        <position position="434"/>
    </location>
    <ligand>
        <name>substrate</name>
    </ligand>
</feature>
<feature type="mutagenesis site" description="Loss of catalytic activity." evidence="3">
    <original>D</original>
    <variation>A</variation>
    <location>
        <position position="43"/>
    </location>
</feature>
<feature type="mutagenesis site" description="Loss of catalytic activity." evidence="3">
    <original>D</original>
    <variation>A</variation>
    <location>
        <position position="182"/>
    </location>
</feature>
<feature type="mutagenesis site" description="Loss of catalytic activity." evidence="3">
    <original>E</original>
    <variation>A</variation>
    <location>
        <position position="419"/>
    </location>
</feature>
<feature type="helix" evidence="21">
    <location>
        <begin position="9"/>
        <end position="22"/>
    </location>
</feature>
<feature type="strand" evidence="21">
    <location>
        <begin position="26"/>
        <end position="29"/>
    </location>
</feature>
<feature type="strand" evidence="21">
    <location>
        <begin position="31"/>
        <end position="36"/>
    </location>
</feature>
<feature type="strand" evidence="21">
    <location>
        <begin position="38"/>
        <end position="40"/>
    </location>
</feature>
<feature type="helix" evidence="21">
    <location>
        <begin position="41"/>
        <end position="51"/>
    </location>
</feature>
<feature type="turn" evidence="21">
    <location>
        <begin position="52"/>
        <end position="54"/>
    </location>
</feature>
<feature type="helix" evidence="21">
    <location>
        <begin position="56"/>
        <end position="67"/>
    </location>
</feature>
<feature type="strand" evidence="21">
    <location>
        <begin position="78"/>
        <end position="80"/>
    </location>
</feature>
<feature type="strand" evidence="25">
    <location>
        <begin position="84"/>
        <end position="86"/>
    </location>
</feature>
<feature type="strand" evidence="24">
    <location>
        <begin position="87"/>
        <end position="90"/>
    </location>
</feature>
<feature type="helix" evidence="21">
    <location>
        <begin position="92"/>
        <end position="95"/>
    </location>
</feature>
<feature type="helix" evidence="21">
    <location>
        <begin position="97"/>
        <end position="100"/>
    </location>
</feature>
<feature type="strand" evidence="22">
    <location>
        <begin position="106"/>
        <end position="108"/>
    </location>
</feature>
<feature type="helix" evidence="21">
    <location>
        <begin position="119"/>
        <end position="133"/>
    </location>
</feature>
<feature type="helix" evidence="21">
    <location>
        <begin position="135"/>
        <end position="162"/>
    </location>
</feature>
<feature type="strand" evidence="21">
    <location>
        <begin position="169"/>
        <end position="175"/>
    </location>
</feature>
<feature type="helix" evidence="21">
    <location>
        <begin position="176"/>
        <end position="179"/>
    </location>
</feature>
<feature type="helix" evidence="21">
    <location>
        <begin position="185"/>
        <end position="187"/>
    </location>
</feature>
<feature type="helix" evidence="21">
    <location>
        <begin position="188"/>
        <end position="192"/>
    </location>
</feature>
<feature type="helix" evidence="21">
    <location>
        <begin position="206"/>
        <end position="209"/>
    </location>
</feature>
<feature type="helix" evidence="21">
    <location>
        <begin position="213"/>
        <end position="215"/>
    </location>
</feature>
<feature type="helix" evidence="21">
    <location>
        <begin position="219"/>
        <end position="234"/>
    </location>
</feature>
<feature type="turn" evidence="21">
    <location>
        <begin position="235"/>
        <end position="237"/>
    </location>
</feature>
<feature type="turn" evidence="21">
    <location>
        <begin position="239"/>
        <end position="241"/>
    </location>
</feature>
<feature type="helix" evidence="21">
    <location>
        <begin position="242"/>
        <end position="245"/>
    </location>
</feature>
<feature type="strand" evidence="21">
    <location>
        <begin position="250"/>
        <end position="252"/>
    </location>
</feature>
<feature type="helix" evidence="21">
    <location>
        <begin position="253"/>
        <end position="272"/>
    </location>
</feature>
<feature type="helix" evidence="21">
    <location>
        <begin position="277"/>
        <end position="296"/>
    </location>
</feature>
<feature type="turn" evidence="21">
    <location>
        <begin position="300"/>
        <end position="302"/>
    </location>
</feature>
<feature type="strand" evidence="21">
    <location>
        <begin position="307"/>
        <end position="309"/>
    </location>
</feature>
<feature type="turn" evidence="21">
    <location>
        <begin position="310"/>
        <end position="313"/>
    </location>
</feature>
<feature type="strand" evidence="21">
    <location>
        <begin position="314"/>
        <end position="316"/>
    </location>
</feature>
<feature type="helix" evidence="21">
    <location>
        <begin position="321"/>
        <end position="324"/>
    </location>
</feature>
<feature type="helix" evidence="21">
    <location>
        <begin position="325"/>
        <end position="329"/>
    </location>
</feature>
<feature type="helix" evidence="21">
    <location>
        <begin position="334"/>
        <end position="345"/>
    </location>
</feature>
<feature type="turn" evidence="21">
    <location>
        <begin position="347"/>
        <end position="351"/>
    </location>
</feature>
<feature type="strand" evidence="21">
    <location>
        <begin position="356"/>
        <end position="358"/>
    </location>
</feature>
<feature type="strand" evidence="20">
    <location>
        <begin position="361"/>
        <end position="363"/>
    </location>
</feature>
<feature type="strand" evidence="23">
    <location>
        <begin position="372"/>
        <end position="374"/>
    </location>
</feature>
<feature type="helix" evidence="21">
    <location>
        <begin position="382"/>
        <end position="395"/>
    </location>
</feature>
<feature type="helix" evidence="21">
    <location>
        <begin position="398"/>
        <end position="412"/>
    </location>
</feature>
<feature type="strand" evidence="21">
    <location>
        <begin position="419"/>
        <end position="421"/>
    </location>
</feature>
<feature type="turn" evidence="21">
    <location>
        <begin position="423"/>
        <end position="425"/>
    </location>
</feature>
<feature type="strand" evidence="21">
    <location>
        <begin position="428"/>
        <end position="430"/>
    </location>
</feature>
<feature type="helix" evidence="21">
    <location>
        <begin position="435"/>
        <end position="445"/>
    </location>
</feature>
<dbReference type="EC" id="3.2.1.208" evidence="1 3"/>
<dbReference type="EMBL" id="AMRA01000001">
    <property type="protein sequence ID" value="EKF25940.1"/>
    <property type="molecule type" value="Genomic_DNA"/>
</dbReference>
<dbReference type="RefSeq" id="WP_005623031.1">
    <property type="nucleotide sequence ID" value="NZ_AMRA01000001.1"/>
</dbReference>
<dbReference type="PDB" id="5OHC">
    <property type="method" value="X-ray"/>
    <property type="resolution" value="2.00 A"/>
    <property type="chains" value="A/B=1-446"/>
</dbReference>
<dbReference type="PDB" id="5OHZ">
    <property type="method" value="X-ray"/>
    <property type="resolution" value="2.04 A"/>
    <property type="chains" value="A/B/C/D=1-446"/>
</dbReference>
<dbReference type="PDB" id="5OI0">
    <property type="method" value="X-ray"/>
    <property type="resolution" value="1.68 A"/>
    <property type="chains" value="A/B=1-446"/>
</dbReference>
<dbReference type="PDB" id="5OI1">
    <property type="method" value="X-ray"/>
    <property type="resolution" value="1.75 A"/>
    <property type="chains" value="A/B=1-446"/>
</dbReference>
<dbReference type="PDB" id="5OIE">
    <property type="method" value="X-ray"/>
    <property type="resolution" value="2.07 A"/>
    <property type="chains" value="A/B=1-446"/>
</dbReference>
<dbReference type="PDB" id="5OIV">
    <property type="method" value="X-ray"/>
    <property type="resolution" value="1.78 A"/>
    <property type="chains" value="A/B=1-446"/>
</dbReference>
<dbReference type="PDB" id="5OIW">
    <property type="method" value="X-ray"/>
    <property type="resolution" value="1.71 A"/>
    <property type="chains" value="A/B=1-446"/>
</dbReference>
<dbReference type="PDB" id="5OJ4">
    <property type="method" value="X-ray"/>
    <property type="resolution" value="1.79 A"/>
    <property type="chains" value="A/B=1-446"/>
</dbReference>
<dbReference type="PDB" id="5OJU">
    <property type="method" value="X-ray"/>
    <property type="resolution" value="2.17 A"/>
    <property type="chains" value="A/B=1-446"/>
</dbReference>
<dbReference type="PDB" id="5OJV">
    <property type="method" value="X-ray"/>
    <property type="resolution" value="2.06 A"/>
    <property type="chains" value="A/B=1-446"/>
</dbReference>
<dbReference type="PDB" id="5ONT">
    <property type="method" value="X-ray"/>
    <property type="resolution" value="2.05 A"/>
    <property type="chains" value="A/B=1-446"/>
</dbReference>
<dbReference type="PDB" id="5ONZ">
    <property type="method" value="X-ray"/>
    <property type="resolution" value="1.93 A"/>
    <property type="chains" value="A/B=1-446"/>
</dbReference>
<dbReference type="PDB" id="5OO2">
    <property type="method" value="X-ray"/>
    <property type="resolution" value="2.06 A"/>
    <property type="chains" value="A/B=1-446"/>
</dbReference>
<dbReference type="PDB" id="6G3N">
    <property type="method" value="X-ray"/>
    <property type="resolution" value="2.32 A"/>
    <property type="chains" value="A/B=1-446"/>
</dbReference>
<dbReference type="PDB" id="6Q5T">
    <property type="method" value="X-ray"/>
    <property type="resolution" value="2.54 A"/>
    <property type="chains" value="A/B=1-446"/>
</dbReference>
<dbReference type="PDBsum" id="5OHC"/>
<dbReference type="PDBsum" id="5OHZ"/>
<dbReference type="PDBsum" id="5OI0"/>
<dbReference type="PDBsum" id="5OI1"/>
<dbReference type="PDBsum" id="5OIE"/>
<dbReference type="PDBsum" id="5OIV"/>
<dbReference type="PDBsum" id="5OIW"/>
<dbReference type="PDBsum" id="5OJ4"/>
<dbReference type="PDBsum" id="5OJU"/>
<dbReference type="PDBsum" id="5OJV"/>
<dbReference type="PDBsum" id="5ONT"/>
<dbReference type="PDBsum" id="5ONZ"/>
<dbReference type="PDBsum" id="5OO2"/>
<dbReference type="PDBsum" id="6G3N"/>
<dbReference type="PDBsum" id="6Q5T"/>
<dbReference type="SMR" id="K5BDL0"/>
<dbReference type="STRING" id="1122247.GCA_000379865_00786"/>
<dbReference type="PATRIC" id="fig|1122247.3.peg.6"/>
<dbReference type="eggNOG" id="COG1626">
    <property type="taxonomic scope" value="Bacteria"/>
</dbReference>
<dbReference type="OrthoDB" id="9781878at2"/>
<dbReference type="BRENDA" id="3.2.1.208">
    <property type="organism ID" value="15810"/>
</dbReference>
<dbReference type="Proteomes" id="UP000006265">
    <property type="component" value="Unassembled WGS sequence"/>
</dbReference>
<dbReference type="GO" id="GO:0004573">
    <property type="term" value="F:Glc3Man9GlcNAc2 oligosaccharide glucosidase activity"/>
    <property type="evidence" value="ECO:0007669"/>
    <property type="project" value="InterPro"/>
</dbReference>
<dbReference type="GO" id="GO:0102547">
    <property type="term" value="F:glucosylglycerate hydrolase activity"/>
    <property type="evidence" value="ECO:0007669"/>
    <property type="project" value="UniProtKB-EC"/>
</dbReference>
<dbReference type="GO" id="GO:0009311">
    <property type="term" value="P:oligosaccharide metabolic process"/>
    <property type="evidence" value="ECO:0007669"/>
    <property type="project" value="InterPro"/>
</dbReference>
<dbReference type="GO" id="GO:0006487">
    <property type="term" value="P:protein N-linked glycosylation"/>
    <property type="evidence" value="ECO:0007669"/>
    <property type="project" value="TreeGrafter"/>
</dbReference>
<dbReference type="Gene3D" id="1.50.10.10">
    <property type="match status" value="1"/>
</dbReference>
<dbReference type="InterPro" id="IPR008928">
    <property type="entry name" value="6-hairpin_glycosidase_sf"/>
</dbReference>
<dbReference type="InterPro" id="IPR012341">
    <property type="entry name" value="6hp_glycosidase-like_sf"/>
</dbReference>
<dbReference type="InterPro" id="IPR004888">
    <property type="entry name" value="Glycoside_hydrolase_63"/>
</dbReference>
<dbReference type="InterPro" id="IPR054491">
    <property type="entry name" value="MGH1-like_GH"/>
</dbReference>
<dbReference type="PANTHER" id="PTHR10412">
    <property type="entry name" value="MANNOSYL-OLIGOSACCHARIDE GLUCOSIDASE"/>
    <property type="match status" value="1"/>
</dbReference>
<dbReference type="PANTHER" id="PTHR10412:SF11">
    <property type="entry name" value="MANNOSYL-OLIGOSACCHARIDE GLUCOSIDASE"/>
    <property type="match status" value="1"/>
</dbReference>
<dbReference type="Pfam" id="PF22422">
    <property type="entry name" value="MGH1-like_GH"/>
    <property type="match status" value="1"/>
</dbReference>
<dbReference type="SUPFAM" id="SSF48208">
    <property type="entry name" value="Six-hairpin glycosidases"/>
    <property type="match status" value="1"/>
</dbReference>
<evidence type="ECO:0000269" key="1">
    <source>
    </source>
</evidence>
<evidence type="ECO:0000269" key="2">
    <source>
    </source>
</evidence>
<evidence type="ECO:0000269" key="3">
    <source>
    </source>
</evidence>
<evidence type="ECO:0000303" key="4">
    <source>
    </source>
</evidence>
<evidence type="ECO:0000305" key="5"/>
<evidence type="ECO:0000305" key="6">
    <source>
    </source>
</evidence>
<evidence type="ECO:0000312" key="7">
    <source>
        <dbReference type="EMBL" id="EKF25940.1"/>
    </source>
</evidence>
<evidence type="ECO:0007744" key="8">
    <source>
        <dbReference type="PDB" id="5OHC"/>
    </source>
</evidence>
<evidence type="ECO:0007744" key="9">
    <source>
        <dbReference type="PDB" id="5OHZ"/>
    </source>
</evidence>
<evidence type="ECO:0007744" key="10">
    <source>
        <dbReference type="PDB" id="5OI0"/>
    </source>
</evidence>
<evidence type="ECO:0007744" key="11">
    <source>
        <dbReference type="PDB" id="5OI1"/>
    </source>
</evidence>
<evidence type="ECO:0007744" key="12">
    <source>
        <dbReference type="PDB" id="5OIE"/>
    </source>
</evidence>
<evidence type="ECO:0007744" key="13">
    <source>
        <dbReference type="PDB" id="5OIV"/>
    </source>
</evidence>
<evidence type="ECO:0007744" key="14">
    <source>
        <dbReference type="PDB" id="5OIW"/>
    </source>
</evidence>
<evidence type="ECO:0007744" key="15">
    <source>
        <dbReference type="PDB" id="5OJ4"/>
    </source>
</evidence>
<evidence type="ECO:0007744" key="16">
    <source>
        <dbReference type="PDB" id="5OJU"/>
    </source>
</evidence>
<evidence type="ECO:0007744" key="17">
    <source>
        <dbReference type="PDB" id="5OJV"/>
    </source>
</evidence>
<evidence type="ECO:0007744" key="18">
    <source>
        <dbReference type="PDB" id="5ONT"/>
    </source>
</evidence>
<evidence type="ECO:0007744" key="19">
    <source>
        <dbReference type="PDB" id="6G3N"/>
    </source>
</evidence>
<evidence type="ECO:0007829" key="20">
    <source>
        <dbReference type="PDB" id="5OHC"/>
    </source>
</evidence>
<evidence type="ECO:0007829" key="21">
    <source>
        <dbReference type="PDB" id="5OI0"/>
    </source>
</evidence>
<evidence type="ECO:0007829" key="22">
    <source>
        <dbReference type="PDB" id="5OJ4"/>
    </source>
</evidence>
<evidence type="ECO:0007829" key="23">
    <source>
        <dbReference type="PDB" id="5OJU"/>
    </source>
</evidence>
<evidence type="ECO:0007829" key="24">
    <source>
        <dbReference type="PDB" id="5ONT"/>
    </source>
</evidence>
<evidence type="ECO:0007829" key="25">
    <source>
        <dbReference type="PDB" id="6Q5T"/>
    </source>
</evidence>
<protein>
    <recommendedName>
        <fullName evidence="4">Glucosylglycerate hydrolase</fullName>
        <shortName evidence="4">GG hydrolase</shortName>
        <ecNumber evidence="1 3">3.2.1.208</ecNumber>
    </recommendedName>
</protein>
<gene>
    <name evidence="4" type="primary">ggh</name>
    <name evidence="7" type="ORF">C731_0006</name>
</gene>
<comment type="function">
    <text evidence="1 3">Catalyzes the hydrolysis of glucosylglycerate (GG) to glycerate and glucose (PubMed:25341489, PubMed:31316802). Involved in recovery from nitrogen starvation by promoting the rapid mobilization of the glucosylglycerate that accumulates under these conditions (PubMed:25341489). Can also hydrolyze mannosylglycerate (MG), with tenfold lower efficiency (PubMed:31316802).</text>
</comment>
<comment type="catalytic activity">
    <reaction evidence="1 3">
        <text>(2R)-2-O-(alpha-D-glucopyranosyl)-glycerate + H2O = (R)-glycerate + D-glucose</text>
        <dbReference type="Rhea" id="RHEA:32059"/>
        <dbReference type="ChEBI" id="CHEBI:4167"/>
        <dbReference type="ChEBI" id="CHEBI:15377"/>
        <dbReference type="ChEBI" id="CHEBI:16659"/>
        <dbReference type="ChEBI" id="CHEBI:62510"/>
        <dbReference type="EC" id="3.2.1.208"/>
    </reaction>
</comment>
<comment type="activity regulation">
    <text evidence="1">Activity is not dependent on divalent cations, but it is enhanced by Mg(2+).</text>
</comment>
<comment type="biophysicochemical properties">
    <kinetics>
        <KM evidence="1">16.7 mM for glucosylglycerate (at 37 degrees Celsius, C-terminally tagged variant)</KM>
        <KM evidence="1">16.7 mM for glucosylglycerate (at 42 degrees Celsius, C-terminally tagged variant)</KM>
        <KM evidence="1">11.2 mM for glucosylglycerate (at 50 degrees Celsius, C-terminally tagged variant)</KM>
        <Vmax evidence="1">13.7 umol/min/mg enzyme with glucosylglycerate as substrate (at 37 degrees Celsius, C-terminally tagged variant)</Vmax>
        <Vmax evidence="1">15.2 umol/min/mg enzyme with glucosylglycerate as substrate (at 42 degrees Celsius, C-terminally tagged variant)</Vmax>
        <Vmax evidence="1">12.3 umol/min/mg enzyme with glucosylglycerate as substrate (at 50 degrees Celsius, C-terminally tagged variant)</Vmax>
        <Vmax evidence="3">3.6 umol/min/mg enzyme with glucosylglycerate as substrate (at 50 degrees Celsius, tag-less variant)</Vmax>
        <Vmax evidence="3">3.09 umol/min/mg enzyme with mannosylglycerate as substrate (at 50 degrees Celsius, tag-less variant)</Vmax>
    </kinetics>
    <phDependence>
        <text evidence="1 3">Optimum pH is 6.0 (tag-less variant) (PubMed:31316802). Optimum pH is 5.8 (C-terminally tagged variant) (PubMed:25341489).</text>
    </phDependence>
    <temperatureDependence>
        <text evidence="1 3">Optimum temperature is 50-55 degrees Celsius (tag-less variant) (PubMed:31316802). Optimum temperature is 42 degrees Celsius (C-terminally tagged variant) (PubMed:25341489).</text>
    </temperatureDependence>
</comment>
<comment type="subunit">
    <text evidence="2 3">Homotetramer. Dimer of dimers.</text>
</comment>
<comment type="induction">
    <text evidence="1">Up-regulated in response to nitrogen shock.</text>
</comment>
<comment type="similarity">
    <text evidence="5">Belongs to the glycosyl hydrolase 63 family.</text>
</comment>